<keyword id="KW-1185">Reference proteome</keyword>
<keyword id="KW-0687">Ribonucleoprotein</keyword>
<keyword id="KW-0689">Ribosomal protein</keyword>
<keyword id="KW-0694">RNA-binding</keyword>
<keyword id="KW-0699">rRNA-binding</keyword>
<accession>A1T038</accession>
<organism>
    <name type="scientific">Psychromonas ingrahamii (strain DSM 17664 / CCUG 51855 / 37)</name>
    <dbReference type="NCBI Taxonomy" id="357804"/>
    <lineage>
        <taxon>Bacteria</taxon>
        <taxon>Pseudomonadati</taxon>
        <taxon>Pseudomonadota</taxon>
        <taxon>Gammaproteobacteria</taxon>
        <taxon>Alteromonadales</taxon>
        <taxon>Psychromonadaceae</taxon>
        <taxon>Psychromonas</taxon>
    </lineage>
</organism>
<sequence>MRHYEIVFMVHPDQSEQVNGMIERYTASITEAGGTVHRLEDWGRRQLAYPINKLHKAHYVLMNIEAGQNVIDDLENAFRFNDSVIRNMIMRTKTAVTEVSVVAKAREERVERAPRAPRPEVKAEPEAEATAEA</sequence>
<proteinExistence type="inferred from homology"/>
<name>RS6_PSYIN</name>
<reference key="1">
    <citation type="journal article" date="2008" name="BMC Genomics">
        <title>Genomics of an extreme psychrophile, Psychromonas ingrahamii.</title>
        <authorList>
            <person name="Riley M."/>
            <person name="Staley J.T."/>
            <person name="Danchin A."/>
            <person name="Wang T.Z."/>
            <person name="Brettin T.S."/>
            <person name="Hauser L.J."/>
            <person name="Land M.L."/>
            <person name="Thompson L.S."/>
        </authorList>
    </citation>
    <scope>NUCLEOTIDE SEQUENCE [LARGE SCALE GENOMIC DNA]</scope>
    <source>
        <strain>DSM 17664 / CCUG 51855 / 37</strain>
    </source>
</reference>
<gene>
    <name evidence="1" type="primary">rpsF</name>
    <name type="ordered locus">Ping_3419</name>
</gene>
<dbReference type="EMBL" id="CP000510">
    <property type="protein sequence ID" value="ABM05103.1"/>
    <property type="molecule type" value="Genomic_DNA"/>
</dbReference>
<dbReference type="RefSeq" id="WP_011771655.1">
    <property type="nucleotide sequence ID" value="NC_008709.1"/>
</dbReference>
<dbReference type="SMR" id="A1T038"/>
<dbReference type="STRING" id="357804.Ping_3419"/>
<dbReference type="KEGG" id="pin:Ping_3419"/>
<dbReference type="eggNOG" id="COG0360">
    <property type="taxonomic scope" value="Bacteria"/>
</dbReference>
<dbReference type="HOGENOM" id="CLU_113441_6_1_6"/>
<dbReference type="OrthoDB" id="9812702at2"/>
<dbReference type="Proteomes" id="UP000000639">
    <property type="component" value="Chromosome"/>
</dbReference>
<dbReference type="GO" id="GO:0022627">
    <property type="term" value="C:cytosolic small ribosomal subunit"/>
    <property type="evidence" value="ECO:0007669"/>
    <property type="project" value="TreeGrafter"/>
</dbReference>
<dbReference type="GO" id="GO:0070181">
    <property type="term" value="F:small ribosomal subunit rRNA binding"/>
    <property type="evidence" value="ECO:0007669"/>
    <property type="project" value="TreeGrafter"/>
</dbReference>
<dbReference type="GO" id="GO:0003735">
    <property type="term" value="F:structural constituent of ribosome"/>
    <property type="evidence" value="ECO:0007669"/>
    <property type="project" value="InterPro"/>
</dbReference>
<dbReference type="GO" id="GO:0006412">
    <property type="term" value="P:translation"/>
    <property type="evidence" value="ECO:0007669"/>
    <property type="project" value="UniProtKB-UniRule"/>
</dbReference>
<dbReference type="CDD" id="cd00473">
    <property type="entry name" value="bS6"/>
    <property type="match status" value="1"/>
</dbReference>
<dbReference type="FunFam" id="3.30.70.60:FF:000003">
    <property type="entry name" value="30S ribosomal protein S6"/>
    <property type="match status" value="1"/>
</dbReference>
<dbReference type="Gene3D" id="3.30.70.60">
    <property type="match status" value="1"/>
</dbReference>
<dbReference type="HAMAP" id="MF_00360">
    <property type="entry name" value="Ribosomal_bS6"/>
    <property type="match status" value="1"/>
</dbReference>
<dbReference type="InterPro" id="IPR000529">
    <property type="entry name" value="Ribosomal_bS6"/>
</dbReference>
<dbReference type="InterPro" id="IPR020815">
    <property type="entry name" value="Ribosomal_bS6_CS"/>
</dbReference>
<dbReference type="InterPro" id="IPR035980">
    <property type="entry name" value="Ribosomal_bS6_sf"/>
</dbReference>
<dbReference type="InterPro" id="IPR020814">
    <property type="entry name" value="Ribosomal_S6_plastid/chlpt"/>
</dbReference>
<dbReference type="InterPro" id="IPR014717">
    <property type="entry name" value="Transl_elong_EF1B/ribsomal_bS6"/>
</dbReference>
<dbReference type="NCBIfam" id="TIGR00166">
    <property type="entry name" value="S6"/>
    <property type="match status" value="1"/>
</dbReference>
<dbReference type="PANTHER" id="PTHR21011">
    <property type="entry name" value="MITOCHONDRIAL 28S RIBOSOMAL PROTEIN S6"/>
    <property type="match status" value="1"/>
</dbReference>
<dbReference type="PANTHER" id="PTHR21011:SF1">
    <property type="entry name" value="SMALL RIBOSOMAL SUBUNIT PROTEIN BS6M"/>
    <property type="match status" value="1"/>
</dbReference>
<dbReference type="Pfam" id="PF01250">
    <property type="entry name" value="Ribosomal_S6"/>
    <property type="match status" value="1"/>
</dbReference>
<dbReference type="SUPFAM" id="SSF54995">
    <property type="entry name" value="Ribosomal protein S6"/>
    <property type="match status" value="1"/>
</dbReference>
<dbReference type="PROSITE" id="PS01048">
    <property type="entry name" value="RIBOSOMAL_S6"/>
    <property type="match status" value="1"/>
</dbReference>
<feature type="chain" id="PRO_1000005323" description="Small ribosomal subunit protein bS6">
    <location>
        <begin position="1"/>
        <end position="133"/>
    </location>
</feature>
<feature type="region of interest" description="Disordered" evidence="2">
    <location>
        <begin position="106"/>
        <end position="133"/>
    </location>
</feature>
<feature type="compositionally biased region" description="Basic and acidic residues" evidence="2">
    <location>
        <begin position="106"/>
        <end position="125"/>
    </location>
</feature>
<protein>
    <recommendedName>
        <fullName evidence="1">Small ribosomal subunit protein bS6</fullName>
    </recommendedName>
    <alternativeName>
        <fullName evidence="3">30S ribosomal protein S6</fullName>
    </alternativeName>
</protein>
<comment type="function">
    <text evidence="1">Binds together with bS18 to 16S ribosomal RNA.</text>
</comment>
<comment type="similarity">
    <text evidence="1">Belongs to the bacterial ribosomal protein bS6 family.</text>
</comment>
<evidence type="ECO:0000255" key="1">
    <source>
        <dbReference type="HAMAP-Rule" id="MF_00360"/>
    </source>
</evidence>
<evidence type="ECO:0000256" key="2">
    <source>
        <dbReference type="SAM" id="MobiDB-lite"/>
    </source>
</evidence>
<evidence type="ECO:0000305" key="3"/>